<evidence type="ECO:0000255" key="1">
    <source>
        <dbReference type="HAMAP-Rule" id="MF_01543"/>
    </source>
</evidence>
<protein>
    <recommendedName>
        <fullName evidence="1">Formate--tetrahydrofolate ligase</fullName>
        <ecNumber evidence="1">6.3.4.3</ecNumber>
    </recommendedName>
    <alternativeName>
        <fullName evidence="1">Formyltetrahydrofolate synthetase</fullName>
        <shortName evidence="1">FHS</shortName>
        <shortName evidence="1">FTHFS</shortName>
    </alternativeName>
</protein>
<dbReference type="EC" id="6.3.4.3" evidence="1"/>
<dbReference type="EMBL" id="AE017198">
    <property type="protein sequence ID" value="AAS09009.1"/>
    <property type="molecule type" value="Genomic_DNA"/>
</dbReference>
<dbReference type="SMR" id="Q74JC1"/>
<dbReference type="KEGG" id="ljo:LJ_1188"/>
<dbReference type="eggNOG" id="COG2759">
    <property type="taxonomic scope" value="Bacteria"/>
</dbReference>
<dbReference type="HOGENOM" id="CLU_003601_3_3_9"/>
<dbReference type="UniPathway" id="UPA00193"/>
<dbReference type="Proteomes" id="UP000000581">
    <property type="component" value="Chromosome"/>
</dbReference>
<dbReference type="GO" id="GO:0005524">
    <property type="term" value="F:ATP binding"/>
    <property type="evidence" value="ECO:0007669"/>
    <property type="project" value="UniProtKB-UniRule"/>
</dbReference>
<dbReference type="GO" id="GO:0004329">
    <property type="term" value="F:formate-tetrahydrofolate ligase activity"/>
    <property type="evidence" value="ECO:0007669"/>
    <property type="project" value="UniProtKB-UniRule"/>
</dbReference>
<dbReference type="GO" id="GO:0035999">
    <property type="term" value="P:tetrahydrofolate interconversion"/>
    <property type="evidence" value="ECO:0007669"/>
    <property type="project" value="UniProtKB-UniRule"/>
</dbReference>
<dbReference type="FunFam" id="3.30.1510.10:FF:000001">
    <property type="entry name" value="Formate--tetrahydrofolate ligase"/>
    <property type="match status" value="1"/>
</dbReference>
<dbReference type="Gene3D" id="3.30.1510.10">
    <property type="entry name" value="Domain 2, N(10)-formyltetrahydrofolate synthetase"/>
    <property type="match status" value="1"/>
</dbReference>
<dbReference type="Gene3D" id="3.10.410.10">
    <property type="entry name" value="Formyltetrahydrofolate synthetase, domain 3"/>
    <property type="match status" value="1"/>
</dbReference>
<dbReference type="Gene3D" id="3.40.50.300">
    <property type="entry name" value="P-loop containing nucleotide triphosphate hydrolases"/>
    <property type="match status" value="1"/>
</dbReference>
<dbReference type="HAMAP" id="MF_01543">
    <property type="entry name" value="FTHFS"/>
    <property type="match status" value="1"/>
</dbReference>
<dbReference type="InterPro" id="IPR000559">
    <property type="entry name" value="Formate_THF_ligase"/>
</dbReference>
<dbReference type="InterPro" id="IPR020628">
    <property type="entry name" value="Formate_THF_ligase_CS"/>
</dbReference>
<dbReference type="InterPro" id="IPR027417">
    <property type="entry name" value="P-loop_NTPase"/>
</dbReference>
<dbReference type="NCBIfam" id="NF010030">
    <property type="entry name" value="PRK13505.1"/>
    <property type="match status" value="1"/>
</dbReference>
<dbReference type="Pfam" id="PF01268">
    <property type="entry name" value="FTHFS"/>
    <property type="match status" value="1"/>
</dbReference>
<dbReference type="SUPFAM" id="SSF52540">
    <property type="entry name" value="P-loop containing nucleoside triphosphate hydrolases"/>
    <property type="match status" value="1"/>
</dbReference>
<dbReference type="PROSITE" id="PS00721">
    <property type="entry name" value="FTHFS_1"/>
    <property type="match status" value="1"/>
</dbReference>
<organism>
    <name type="scientific">Lactobacillus johnsonii (strain CNCM I-12250 / La1 / NCC 533)</name>
    <dbReference type="NCBI Taxonomy" id="257314"/>
    <lineage>
        <taxon>Bacteria</taxon>
        <taxon>Bacillati</taxon>
        <taxon>Bacillota</taxon>
        <taxon>Bacilli</taxon>
        <taxon>Lactobacillales</taxon>
        <taxon>Lactobacillaceae</taxon>
        <taxon>Lactobacillus</taxon>
    </lineage>
</organism>
<sequence length="557" mass="60475">MKSDIEIAQDTKELPITEIAKKVDLQPDEIELYGNDKAKISWKGINRIKQGKKLGKLILVTSISPTPAGEGKSTITIGLGDAISNQLHKNTLIALREPSMGPVFGLKGGATGGGYAQIITMEDINLHFTGDMHALTSAIDTLAALVDNYIYQDNSLELDPNRILLKRGIDVNDRTLRKITIGQGSRFNGIEHEASFAITVANELMAILCLATDIDDLKKRIGNMLVGFSVKDEPVYVKDLGFEGAIAALLSTALKPNLVQTLEHTPAIVHGGPFANIAHGANSVIATNTALHLSDYVLTEAGFGADLGGQKFMDFVSNHLDKRPDAVVVVATVRALKYQAEETTDHLDEENIPALEKGFENLKRHMENMAHYGVPVIVLINKFASDTEQELSKLKELVKADGFECEVVSYHDEGSKGGIKAAEKVVELTNKASDFTSVYEPTDSVEEKISKIAHNIYHAKDIEYSDKAKDQLAEIKKMGKDNLPVIMAKTQYSFTDKKSILGAPKDFTLHVKNLALKNGAGFIVVATGSILDMPGLPKYPAALDIDVDNNGKISGLF</sequence>
<reference key="1">
    <citation type="journal article" date="2004" name="Proc. Natl. Acad. Sci. U.S.A.">
        <title>The genome sequence of the probiotic intestinal bacterium Lactobacillus johnsonii NCC 533.</title>
        <authorList>
            <person name="Pridmore R.D."/>
            <person name="Berger B."/>
            <person name="Desiere F."/>
            <person name="Vilanova D."/>
            <person name="Barretto C."/>
            <person name="Pittet A.-C."/>
            <person name="Zwahlen M.-C."/>
            <person name="Rouvet M."/>
            <person name="Altermann E."/>
            <person name="Barrangou R."/>
            <person name="Mollet B."/>
            <person name="Mercenier A."/>
            <person name="Klaenhammer T."/>
            <person name="Arigoni F."/>
            <person name="Schell M.A."/>
        </authorList>
    </citation>
    <scope>NUCLEOTIDE SEQUENCE [LARGE SCALE GENOMIC DNA]</scope>
    <source>
        <strain>CNCM I-1225 / La1 / NCC 533</strain>
    </source>
</reference>
<feature type="chain" id="PRO_0000199353" description="Formate--tetrahydrofolate ligase">
    <location>
        <begin position="1"/>
        <end position="557"/>
    </location>
</feature>
<feature type="binding site" evidence="1">
    <location>
        <begin position="66"/>
        <end position="73"/>
    </location>
    <ligand>
        <name>ATP</name>
        <dbReference type="ChEBI" id="CHEBI:30616"/>
    </ligand>
</feature>
<comment type="catalytic activity">
    <reaction evidence="1">
        <text>(6S)-5,6,7,8-tetrahydrofolate + formate + ATP = (6R)-10-formyltetrahydrofolate + ADP + phosphate</text>
        <dbReference type="Rhea" id="RHEA:20221"/>
        <dbReference type="ChEBI" id="CHEBI:15740"/>
        <dbReference type="ChEBI" id="CHEBI:30616"/>
        <dbReference type="ChEBI" id="CHEBI:43474"/>
        <dbReference type="ChEBI" id="CHEBI:57453"/>
        <dbReference type="ChEBI" id="CHEBI:195366"/>
        <dbReference type="ChEBI" id="CHEBI:456216"/>
        <dbReference type="EC" id="6.3.4.3"/>
    </reaction>
</comment>
<comment type="pathway">
    <text evidence="1">One-carbon metabolism; tetrahydrofolate interconversion.</text>
</comment>
<comment type="similarity">
    <text evidence="1">Belongs to the formate--tetrahydrofolate ligase family.</text>
</comment>
<gene>
    <name evidence="1" type="primary">fhs</name>
    <name type="ordered locus">LJ_1188</name>
</gene>
<proteinExistence type="inferred from homology"/>
<name>FTHS_LACJO</name>
<accession>Q74JC1</accession>
<keyword id="KW-0067">ATP-binding</keyword>
<keyword id="KW-0436">Ligase</keyword>
<keyword id="KW-0547">Nucleotide-binding</keyword>
<keyword id="KW-0554">One-carbon metabolism</keyword>